<gene>
    <name type="primary">16.9</name>
</gene>
<sequence>MSVQLNAFTFILERRGWRMVCYEQLTTNGTRILHFYLKDNPTFFATYSSQFLSDTKMIRRFASWSGQLLEGSNSVFWTNITPFEPIDEETAEDIKNLDKVVEGMNFTL</sequence>
<name>GP169_BPPH2</name>
<comment type="similarity">
    <text evidence="1">Belongs to the phi29likevirus gp16.9 family.</text>
</comment>
<reference key="1">
    <citation type="journal article" date="1985" name="Gene">
        <title>The complete sequence of the Bacillus phage phi 29 right early region.</title>
        <authorList>
            <person name="Garvey K.J."/>
            <person name="Yoshikawa H."/>
            <person name="Ito J."/>
        </authorList>
    </citation>
    <scope>NUCLEOTIDE SEQUENCE [GENOMIC DNA]</scope>
</reference>
<reference key="2">
    <citation type="submission" date="2008-05" db="EMBL/GenBank/DDBJ databases">
        <authorList>
            <person name="Villegas A.P."/>
            <person name="Lingohr E.J."/>
            <person name="Ceyssens P.-J."/>
            <person name="Kropinski A.M."/>
        </authorList>
    </citation>
    <scope>NUCLEOTIDE SEQUENCE [GENOMIC DNA]</scope>
</reference>
<proteinExistence type="inferred from homology"/>
<dbReference type="EMBL" id="M14430">
    <property type="protein sequence ID" value="AAA88350.1"/>
    <property type="molecule type" value="Genomic_DNA"/>
</dbReference>
<dbReference type="EMBL" id="EU771092">
    <property type="protein sequence ID" value="ACE96043.1"/>
    <property type="molecule type" value="Genomic_DNA"/>
</dbReference>
<dbReference type="PIR" id="JN0031">
    <property type="entry name" value="JN0031"/>
</dbReference>
<dbReference type="RefSeq" id="YP_002004549.1">
    <property type="nucleotide sequence ID" value="NC_011048.1"/>
</dbReference>
<dbReference type="GeneID" id="6446515"/>
<dbReference type="KEGG" id="vg:6446515"/>
<dbReference type="Proteomes" id="UP000001207">
    <property type="component" value="Genome"/>
</dbReference>
<feature type="chain" id="PRO_0000106619" description="Gene product 16.9">
    <location>
        <begin position="1"/>
        <end position="108"/>
    </location>
</feature>
<protein>
    <recommendedName>
        <fullName>Gene product 16.9</fullName>
        <shortName>gp16.9</shortName>
    </recommendedName>
    <alternativeName>
        <fullName>Protein p16.9</fullName>
    </alternativeName>
</protein>
<organism>
    <name type="scientific">Bacillus phage phi29</name>
    <name type="common">Bacteriophage phi-29</name>
    <dbReference type="NCBI Taxonomy" id="2884424"/>
    <lineage>
        <taxon>Viruses</taxon>
        <taxon>Duplodnaviria</taxon>
        <taxon>Heunggongvirae</taxon>
        <taxon>Uroviricota</taxon>
        <taxon>Caudoviricetes</taxon>
        <taxon>Salasmaviridae</taxon>
        <taxon>Picovirinae</taxon>
        <taxon>Salasvirus</taxon>
        <taxon>Salasvirus phi29</taxon>
    </lineage>
</organism>
<evidence type="ECO:0000305" key="1"/>
<keyword id="KW-0244">Early protein</keyword>
<keyword id="KW-1185">Reference proteome</keyword>
<organismHost>
    <name type="scientific">Bacillus subtilis</name>
    <dbReference type="NCBI Taxonomy" id="1423"/>
</organismHost>
<accession>P68936</accession>
<accession>B3VMQ6</accession>
<accession>P08388</accession>